<name>ATP6_AQUAE</name>
<evidence type="ECO:0000255" key="1">
    <source>
        <dbReference type="HAMAP-Rule" id="MF_01393"/>
    </source>
</evidence>
<comment type="function">
    <text evidence="1">Key component of the proton channel; it plays a direct role in the translocation of protons across the membrane.</text>
</comment>
<comment type="subunit">
    <text evidence="1">F-type ATPases have 2 components, CF(1) - the catalytic core - and CF(0) - the membrane proton channel. CF(1) has five subunits: alpha(3), beta(3), gamma(1), delta(1), epsilon(1). CF(0) has three main subunits: a(1), b(2) and c(9-12). The alpha and beta chains form an alternating ring which encloses part of the gamma chain. CF(1) is attached to CF(0) by a central stalk formed by the gamma and epsilon chains, while a peripheral stalk is formed by the delta and b chains.</text>
</comment>
<comment type="subcellular location">
    <subcellularLocation>
        <location evidence="1">Cell inner membrane</location>
        <topology evidence="1">Multi-pass membrane protein</topology>
    </subcellularLocation>
</comment>
<comment type="similarity">
    <text evidence="1">Belongs to the ATPase A chain family.</text>
</comment>
<feature type="chain" id="PRO_0000082041" description="ATP synthase subunit a">
    <location>
        <begin position="1"/>
        <end position="216"/>
    </location>
</feature>
<feature type="transmembrane region" description="Helical" evidence="1">
    <location>
        <begin position="1"/>
        <end position="21"/>
    </location>
</feature>
<feature type="transmembrane region" description="Helical" evidence="1">
    <location>
        <begin position="62"/>
        <end position="82"/>
    </location>
</feature>
<feature type="transmembrane region" description="Helical" evidence="1">
    <location>
        <begin position="88"/>
        <end position="108"/>
    </location>
</feature>
<feature type="transmembrane region" description="Helical" evidence="1">
    <location>
        <begin position="119"/>
        <end position="139"/>
    </location>
</feature>
<feature type="transmembrane region" description="Helical" evidence="1">
    <location>
        <begin position="149"/>
        <end position="169"/>
    </location>
</feature>
<feature type="transmembrane region" description="Helical" evidence="1">
    <location>
        <begin position="174"/>
        <end position="194"/>
    </location>
</feature>
<feature type="transmembrane region" description="Helical" evidence="1">
    <location>
        <begin position="196"/>
        <end position="216"/>
    </location>
</feature>
<keyword id="KW-0066">ATP synthesis</keyword>
<keyword id="KW-0997">Cell inner membrane</keyword>
<keyword id="KW-1003">Cell membrane</keyword>
<keyword id="KW-0138">CF(0)</keyword>
<keyword id="KW-0375">Hydrogen ion transport</keyword>
<keyword id="KW-0406">Ion transport</keyword>
<keyword id="KW-0472">Membrane</keyword>
<keyword id="KW-1185">Reference proteome</keyword>
<keyword id="KW-0812">Transmembrane</keyword>
<keyword id="KW-1133">Transmembrane helix</keyword>
<keyword id="KW-0813">Transport</keyword>
<gene>
    <name evidence="1" type="primary">atpB</name>
    <name type="ordered locus">aq_179</name>
</gene>
<organism>
    <name type="scientific">Aquifex aeolicus (strain VF5)</name>
    <dbReference type="NCBI Taxonomy" id="224324"/>
    <lineage>
        <taxon>Bacteria</taxon>
        <taxon>Pseudomonadati</taxon>
        <taxon>Aquificota</taxon>
        <taxon>Aquificia</taxon>
        <taxon>Aquificales</taxon>
        <taxon>Aquificaceae</taxon>
        <taxon>Aquifex</taxon>
    </lineage>
</organism>
<dbReference type="EMBL" id="AE000657">
    <property type="protein sequence ID" value="AAC06523.1"/>
    <property type="molecule type" value="Genomic_DNA"/>
</dbReference>
<dbReference type="PIR" id="B70317">
    <property type="entry name" value="B70317"/>
</dbReference>
<dbReference type="RefSeq" id="NP_213126.1">
    <property type="nucleotide sequence ID" value="NC_000918.1"/>
</dbReference>
<dbReference type="RefSeq" id="WP_010880064.1">
    <property type="nucleotide sequence ID" value="NC_000918.1"/>
</dbReference>
<dbReference type="SMR" id="O66566"/>
<dbReference type="FunCoup" id="O66566">
    <property type="interactions" value="292"/>
</dbReference>
<dbReference type="STRING" id="224324.aq_179"/>
<dbReference type="EnsemblBacteria" id="AAC06523">
    <property type="protein sequence ID" value="AAC06523"/>
    <property type="gene ID" value="aq_179"/>
</dbReference>
<dbReference type="KEGG" id="aae:aq_179"/>
<dbReference type="PATRIC" id="fig|224324.8.peg.156"/>
<dbReference type="eggNOG" id="COG0356">
    <property type="taxonomic scope" value="Bacteria"/>
</dbReference>
<dbReference type="HOGENOM" id="CLU_041018_2_2_0"/>
<dbReference type="InParanoid" id="O66566"/>
<dbReference type="OrthoDB" id="9789241at2"/>
<dbReference type="Proteomes" id="UP000000798">
    <property type="component" value="Chromosome"/>
</dbReference>
<dbReference type="GO" id="GO:0005886">
    <property type="term" value="C:plasma membrane"/>
    <property type="evidence" value="ECO:0000318"/>
    <property type="project" value="GO_Central"/>
</dbReference>
<dbReference type="GO" id="GO:0045259">
    <property type="term" value="C:proton-transporting ATP synthase complex"/>
    <property type="evidence" value="ECO:0007669"/>
    <property type="project" value="UniProtKB-KW"/>
</dbReference>
<dbReference type="GO" id="GO:0046933">
    <property type="term" value="F:proton-transporting ATP synthase activity, rotational mechanism"/>
    <property type="evidence" value="ECO:0000318"/>
    <property type="project" value="GO_Central"/>
</dbReference>
<dbReference type="GO" id="GO:0042777">
    <property type="term" value="P:proton motive force-driven plasma membrane ATP synthesis"/>
    <property type="evidence" value="ECO:0000318"/>
    <property type="project" value="GO_Central"/>
</dbReference>
<dbReference type="CDD" id="cd00310">
    <property type="entry name" value="ATP-synt_Fo_a_6"/>
    <property type="match status" value="1"/>
</dbReference>
<dbReference type="FunFam" id="1.20.120.220:FF:000006">
    <property type="entry name" value="ATP synthase subunit a"/>
    <property type="match status" value="1"/>
</dbReference>
<dbReference type="Gene3D" id="1.20.120.220">
    <property type="entry name" value="ATP synthase, F0 complex, subunit A"/>
    <property type="match status" value="1"/>
</dbReference>
<dbReference type="HAMAP" id="MF_01393">
    <property type="entry name" value="ATP_synth_a_bact"/>
    <property type="match status" value="1"/>
</dbReference>
<dbReference type="InterPro" id="IPR045082">
    <property type="entry name" value="ATP_syn_F0_a_bact/chloroplast"/>
</dbReference>
<dbReference type="InterPro" id="IPR000568">
    <property type="entry name" value="ATP_synth_F0_asu"/>
</dbReference>
<dbReference type="InterPro" id="IPR023011">
    <property type="entry name" value="ATP_synth_F0_asu_AS"/>
</dbReference>
<dbReference type="InterPro" id="IPR035908">
    <property type="entry name" value="F0_ATP_A_sf"/>
</dbReference>
<dbReference type="NCBIfam" id="TIGR01131">
    <property type="entry name" value="ATP_synt_6_or_A"/>
    <property type="match status" value="1"/>
</dbReference>
<dbReference type="PANTHER" id="PTHR42823">
    <property type="entry name" value="ATP SYNTHASE SUBUNIT A, CHLOROPLASTIC"/>
    <property type="match status" value="1"/>
</dbReference>
<dbReference type="PANTHER" id="PTHR42823:SF3">
    <property type="entry name" value="ATP SYNTHASE SUBUNIT A, CHLOROPLASTIC"/>
    <property type="match status" value="1"/>
</dbReference>
<dbReference type="Pfam" id="PF00119">
    <property type="entry name" value="ATP-synt_A"/>
    <property type="match status" value="1"/>
</dbReference>
<dbReference type="PRINTS" id="PR00123">
    <property type="entry name" value="ATPASEA"/>
</dbReference>
<dbReference type="SUPFAM" id="SSF81336">
    <property type="entry name" value="F1F0 ATP synthase subunit A"/>
    <property type="match status" value="1"/>
</dbReference>
<dbReference type="PROSITE" id="PS00449">
    <property type="entry name" value="ATPASE_A"/>
    <property type="match status" value="1"/>
</dbReference>
<sequence length="216" mass="24025">MEYSHVVYALLAVALAIIFVLKGGKPSLKPTKYQALLEGYLRFVRNMLLENVGERGLKYVPLIAAIGLFVFFGNILGMVPGFEAPTANINTNLALALLVFFYYHFEGFRENGLAYLKHFMGPIPLMAPFFFVVEVISHIARPITLSLRLFANMKAGALLLLTLVSLVIKNPFTLVVSPVVLIFVIAIKFLAIFIQTYIFMILSVVYIAGAVAHEEH</sequence>
<reference key="1">
    <citation type="journal article" date="1998" name="Nature">
        <title>The complete genome of the hyperthermophilic bacterium Aquifex aeolicus.</title>
        <authorList>
            <person name="Deckert G."/>
            <person name="Warren P.V."/>
            <person name="Gaasterland T."/>
            <person name="Young W.G."/>
            <person name="Lenox A.L."/>
            <person name="Graham D.E."/>
            <person name="Overbeek R."/>
            <person name="Snead M.A."/>
            <person name="Keller M."/>
            <person name="Aujay M."/>
            <person name="Huber R."/>
            <person name="Feldman R.A."/>
            <person name="Short J.M."/>
            <person name="Olsen G.J."/>
            <person name="Swanson R.V."/>
        </authorList>
    </citation>
    <scope>NUCLEOTIDE SEQUENCE [LARGE SCALE GENOMIC DNA]</scope>
    <source>
        <strain>VF5</strain>
    </source>
</reference>
<accession>O66566</accession>
<proteinExistence type="inferred from homology"/>
<protein>
    <recommendedName>
        <fullName evidence="1">ATP synthase subunit a</fullName>
    </recommendedName>
    <alternativeName>
        <fullName evidence="1">ATP synthase F0 sector subunit a</fullName>
    </alternativeName>
    <alternativeName>
        <fullName evidence="1">F-ATPase subunit 6</fullName>
    </alternativeName>
</protein>